<keyword id="KW-0067">ATP-binding</keyword>
<keyword id="KW-0436">Ligase</keyword>
<keyword id="KW-0547">Nucleotide-binding</keyword>
<keyword id="KW-0648">Protein biosynthesis</keyword>
<keyword id="KW-1185">Reference proteome</keyword>
<evidence type="ECO:0000255" key="1">
    <source>
        <dbReference type="HAMAP-Rule" id="MF_00120"/>
    </source>
</evidence>
<dbReference type="EC" id="6.3.5.7" evidence="1"/>
<dbReference type="EMBL" id="CP001173">
    <property type="protein sequence ID" value="ACI27544.1"/>
    <property type="molecule type" value="Genomic_DNA"/>
</dbReference>
<dbReference type="RefSeq" id="WP_000631486.1">
    <property type="nucleotide sequence ID" value="NC_011333.1"/>
</dbReference>
<dbReference type="SMR" id="B5Z7J5"/>
<dbReference type="KEGG" id="hpg:HPG27_789"/>
<dbReference type="HOGENOM" id="CLU_009600_0_3_7"/>
<dbReference type="Proteomes" id="UP000001735">
    <property type="component" value="Chromosome"/>
</dbReference>
<dbReference type="GO" id="GO:0030956">
    <property type="term" value="C:glutamyl-tRNA(Gln) amidotransferase complex"/>
    <property type="evidence" value="ECO:0007669"/>
    <property type="project" value="InterPro"/>
</dbReference>
<dbReference type="GO" id="GO:0005524">
    <property type="term" value="F:ATP binding"/>
    <property type="evidence" value="ECO:0007669"/>
    <property type="project" value="UniProtKB-KW"/>
</dbReference>
<dbReference type="GO" id="GO:0050567">
    <property type="term" value="F:glutaminyl-tRNA synthase (glutamine-hydrolyzing) activity"/>
    <property type="evidence" value="ECO:0007669"/>
    <property type="project" value="UniProtKB-UniRule"/>
</dbReference>
<dbReference type="GO" id="GO:0006412">
    <property type="term" value="P:translation"/>
    <property type="evidence" value="ECO:0007669"/>
    <property type="project" value="UniProtKB-UniRule"/>
</dbReference>
<dbReference type="Gene3D" id="3.90.1300.10">
    <property type="entry name" value="Amidase signature (AS) domain"/>
    <property type="match status" value="1"/>
</dbReference>
<dbReference type="HAMAP" id="MF_00120">
    <property type="entry name" value="GatA"/>
    <property type="match status" value="1"/>
</dbReference>
<dbReference type="InterPro" id="IPR000120">
    <property type="entry name" value="Amidase"/>
</dbReference>
<dbReference type="InterPro" id="IPR020556">
    <property type="entry name" value="Amidase_CS"/>
</dbReference>
<dbReference type="InterPro" id="IPR023631">
    <property type="entry name" value="Amidase_dom"/>
</dbReference>
<dbReference type="InterPro" id="IPR036928">
    <property type="entry name" value="AS_sf"/>
</dbReference>
<dbReference type="InterPro" id="IPR004412">
    <property type="entry name" value="GatA"/>
</dbReference>
<dbReference type="NCBIfam" id="TIGR00132">
    <property type="entry name" value="gatA"/>
    <property type="match status" value="1"/>
</dbReference>
<dbReference type="PANTHER" id="PTHR11895:SF151">
    <property type="entry name" value="GLUTAMYL-TRNA(GLN) AMIDOTRANSFERASE SUBUNIT A"/>
    <property type="match status" value="1"/>
</dbReference>
<dbReference type="PANTHER" id="PTHR11895">
    <property type="entry name" value="TRANSAMIDASE"/>
    <property type="match status" value="1"/>
</dbReference>
<dbReference type="Pfam" id="PF01425">
    <property type="entry name" value="Amidase"/>
    <property type="match status" value="1"/>
</dbReference>
<dbReference type="SUPFAM" id="SSF75304">
    <property type="entry name" value="Amidase signature (AS) enzymes"/>
    <property type="match status" value="1"/>
</dbReference>
<dbReference type="PROSITE" id="PS00571">
    <property type="entry name" value="AMIDASES"/>
    <property type="match status" value="1"/>
</dbReference>
<feature type="chain" id="PRO_1000095139" description="Glutamyl-tRNA(Gln) amidotransferase subunit A">
    <location>
        <begin position="1"/>
        <end position="453"/>
    </location>
</feature>
<feature type="active site" description="Charge relay system" evidence="1">
    <location>
        <position position="53"/>
    </location>
</feature>
<feature type="active site" description="Charge relay system" evidence="1">
    <location>
        <position position="128"/>
    </location>
</feature>
<feature type="active site" description="Acyl-ester intermediate" evidence="1">
    <location>
        <position position="152"/>
    </location>
</feature>
<proteinExistence type="inferred from homology"/>
<comment type="function">
    <text evidence="1">Allows the formation of correctly charged Gln-tRNA(Gln) through the transamidation of misacylated Glu-tRNA(Gln) in organisms which lack glutaminyl-tRNA synthetase. The reaction takes place in the presence of glutamine and ATP through an activated gamma-phospho-Glu-tRNA(Gln).</text>
</comment>
<comment type="catalytic activity">
    <reaction evidence="1">
        <text>L-glutamyl-tRNA(Gln) + L-glutamine + ATP + H2O = L-glutaminyl-tRNA(Gln) + L-glutamate + ADP + phosphate + H(+)</text>
        <dbReference type="Rhea" id="RHEA:17521"/>
        <dbReference type="Rhea" id="RHEA-COMP:9681"/>
        <dbReference type="Rhea" id="RHEA-COMP:9684"/>
        <dbReference type="ChEBI" id="CHEBI:15377"/>
        <dbReference type="ChEBI" id="CHEBI:15378"/>
        <dbReference type="ChEBI" id="CHEBI:29985"/>
        <dbReference type="ChEBI" id="CHEBI:30616"/>
        <dbReference type="ChEBI" id="CHEBI:43474"/>
        <dbReference type="ChEBI" id="CHEBI:58359"/>
        <dbReference type="ChEBI" id="CHEBI:78520"/>
        <dbReference type="ChEBI" id="CHEBI:78521"/>
        <dbReference type="ChEBI" id="CHEBI:456216"/>
        <dbReference type="EC" id="6.3.5.7"/>
    </reaction>
</comment>
<comment type="subunit">
    <text evidence="1">Heterotrimer of A, B and C subunits.</text>
</comment>
<comment type="similarity">
    <text evidence="1">Belongs to the amidase family. GatA subfamily.</text>
</comment>
<gene>
    <name evidence="1" type="primary">gatA</name>
    <name type="ordered locus">HPG27_789</name>
</gene>
<accession>B5Z7J5</accession>
<name>GATA_HELPG</name>
<sequence>MITLKQALSLSQDELETLKNEIDAKVRASDLNAYIKAPSLNGASAKGVPILIKDNISVKGWEITCSSKILKGYVAPYHASVMENLHQNSMAGFGLSNMDEFAMGSTTESSCYGITKNPRDKNRVPGGSSGGSAAAVAGGLAVAALGSDTGGSIRQPASYCGCVGLKPTYGRVSRYGLIAYCSSFDQIGPITQNVEDASILFDAISGHDNKDSTSANLKPTQTFKNLNKDKRFKIAILRDHIKDASSEVQLAYENTLKALKEMGHEIVEKKMLDSHYQISIYYIISMAEASSNLARFDGVRYGRRAQNIKDLKELYLKSRSEGFGDEVKRRIMLGNFVLSSGYYDAYYLKAQQMRLIIKEQYNKIFEEVDLIFTPVAPTSAHLFNYHASPLEMYLSDIYTIGANLSGLPALSLPVAKDPLGLPIGMQFIAKAFDEQSLLDISYALEQELDLKLD</sequence>
<protein>
    <recommendedName>
        <fullName evidence="1">Glutamyl-tRNA(Gln) amidotransferase subunit A</fullName>
        <shortName evidence="1">Glu-ADT subunit A</shortName>
        <ecNumber evidence="1">6.3.5.7</ecNumber>
    </recommendedName>
</protein>
<organism>
    <name type="scientific">Helicobacter pylori (strain G27)</name>
    <dbReference type="NCBI Taxonomy" id="563041"/>
    <lineage>
        <taxon>Bacteria</taxon>
        <taxon>Pseudomonadati</taxon>
        <taxon>Campylobacterota</taxon>
        <taxon>Epsilonproteobacteria</taxon>
        <taxon>Campylobacterales</taxon>
        <taxon>Helicobacteraceae</taxon>
        <taxon>Helicobacter</taxon>
    </lineage>
</organism>
<reference key="1">
    <citation type="journal article" date="2009" name="J. Bacteriol.">
        <title>The complete genome sequence of Helicobacter pylori strain G27.</title>
        <authorList>
            <person name="Baltrus D.A."/>
            <person name="Amieva M.R."/>
            <person name="Covacci A."/>
            <person name="Lowe T.M."/>
            <person name="Merrell D.S."/>
            <person name="Ottemann K.M."/>
            <person name="Stein M."/>
            <person name="Salama N.R."/>
            <person name="Guillemin K."/>
        </authorList>
    </citation>
    <scope>NUCLEOTIDE SEQUENCE [LARGE SCALE GENOMIC DNA]</scope>
    <source>
        <strain>G27</strain>
    </source>
</reference>